<protein>
    <recommendedName>
        <fullName evidence="1">Replication initiation control protein YabA</fullName>
    </recommendedName>
</protein>
<organism>
    <name type="scientific">Staphylococcus aureus (strain Newman)</name>
    <dbReference type="NCBI Taxonomy" id="426430"/>
    <lineage>
        <taxon>Bacteria</taxon>
        <taxon>Bacillati</taxon>
        <taxon>Bacillota</taxon>
        <taxon>Bacilli</taxon>
        <taxon>Bacillales</taxon>
        <taxon>Staphylococcaceae</taxon>
        <taxon>Staphylococcus</taxon>
    </lineage>
</organism>
<accession>A6QEE0</accession>
<comment type="function">
    <text evidence="1">Involved in control of chromosome replication initiation. Inhibits the cooperative binding of DnaA to the oriC region, thus negatively regulating initiation of chromosome replication. Inhibits the ability of DnaA-ATP to form a helix on DNA; does not disassemble preformed DnaA-DNA helices. Decreases the residence time of DnaA on the chromosome at its binding sites (oriC, replication forks and promoter-binding sites). Tethers DnaA to the replication machinery via the DNA polymerase beta sliding clamp subunit (dnaN). Associates with oriC and other DnaA targets on the chromosome in a DnaA-dependent manner.</text>
</comment>
<comment type="cofactor">
    <cofactor evidence="1">
        <name>Zn(2+)</name>
        <dbReference type="ChEBI" id="CHEBI:29105"/>
    </cofactor>
    <text evidence="1">Binds 1 zinc ion per subunit.</text>
</comment>
<comment type="subunit">
    <text evidence="1">Homotetramer. Interacts with both DnaA and DnaN, acting as a bridge between these two proteins.</text>
</comment>
<comment type="subcellular location">
    <subcellularLocation>
        <location evidence="1">Cytoplasm</location>
        <location evidence="1">Nucleoid</location>
    </subcellularLocation>
    <text evidence="1">Localizes in tight foci, which correspond to the replisome at mid-cell throughout the cell cycle.</text>
</comment>
<comment type="similarity">
    <text evidence="1">Belongs to the YabA family.</text>
</comment>
<proteinExistence type="inferred from homology"/>
<sequence length="115" mass="12926">MDRNEIFEKIMRLEMNVNQLSKETSELKALAVELVEENVALQLENDNLKKVLGNDEPTTIDTANSKPAKAVKKPLPSKDNLAILYGEGFHICKGELFGKHRHGEDCLFCLEVLSD</sequence>
<keyword id="KW-0963">Cytoplasm</keyword>
<keyword id="KW-0235">DNA replication</keyword>
<keyword id="KW-0236">DNA replication inhibitor</keyword>
<keyword id="KW-0479">Metal-binding</keyword>
<keyword id="KW-0862">Zinc</keyword>
<evidence type="ECO:0000255" key="1">
    <source>
        <dbReference type="HAMAP-Rule" id="MF_01159"/>
    </source>
</evidence>
<feature type="chain" id="PRO_1000073073" description="Replication initiation control protein YabA">
    <location>
        <begin position="1"/>
        <end position="115"/>
    </location>
</feature>
<feature type="binding site" evidence="1">
    <location>
        <position position="90"/>
    </location>
    <ligand>
        <name>Zn(2+)</name>
        <dbReference type="ChEBI" id="CHEBI:29105"/>
    </ligand>
</feature>
<feature type="binding site" evidence="1">
    <location>
        <position position="92"/>
    </location>
    <ligand>
        <name>Zn(2+)</name>
        <dbReference type="ChEBI" id="CHEBI:29105"/>
    </ligand>
</feature>
<feature type="binding site" evidence="1">
    <location>
        <position position="106"/>
    </location>
    <ligand>
        <name>Zn(2+)</name>
        <dbReference type="ChEBI" id="CHEBI:29105"/>
    </ligand>
</feature>
<feature type="binding site" evidence="1">
    <location>
        <position position="109"/>
    </location>
    <ligand>
        <name>Zn(2+)</name>
        <dbReference type="ChEBI" id="CHEBI:29105"/>
    </ligand>
</feature>
<reference key="1">
    <citation type="journal article" date="2008" name="J. Bacteriol.">
        <title>Genome sequence of Staphylococcus aureus strain Newman and comparative analysis of staphylococcal genomes: polymorphism and evolution of two major pathogenicity islands.</title>
        <authorList>
            <person name="Baba T."/>
            <person name="Bae T."/>
            <person name="Schneewind O."/>
            <person name="Takeuchi F."/>
            <person name="Hiramatsu K."/>
        </authorList>
    </citation>
    <scope>NUCLEOTIDE SEQUENCE [LARGE SCALE GENOMIC DNA]</scope>
    <source>
        <strain>Newman</strain>
    </source>
</reference>
<name>YABA_STAAE</name>
<dbReference type="EMBL" id="AP009351">
    <property type="protein sequence ID" value="BAF66722.1"/>
    <property type="molecule type" value="Genomic_DNA"/>
</dbReference>
<dbReference type="RefSeq" id="WP_000375686.1">
    <property type="nucleotide sequence ID" value="NZ_JBBIAE010000016.1"/>
</dbReference>
<dbReference type="SMR" id="A6QEE0"/>
<dbReference type="KEGG" id="sae:NWMN_0450"/>
<dbReference type="HOGENOM" id="CLU_157169_1_0_9"/>
<dbReference type="Proteomes" id="UP000006386">
    <property type="component" value="Chromosome"/>
</dbReference>
<dbReference type="GO" id="GO:0009295">
    <property type="term" value="C:nucleoid"/>
    <property type="evidence" value="ECO:0007669"/>
    <property type="project" value="UniProtKB-SubCell"/>
</dbReference>
<dbReference type="GO" id="GO:0006260">
    <property type="term" value="P:DNA replication"/>
    <property type="evidence" value="ECO:0007669"/>
    <property type="project" value="UniProtKB-UniRule"/>
</dbReference>
<dbReference type="HAMAP" id="MF_01159">
    <property type="entry name" value="YabA"/>
    <property type="match status" value="1"/>
</dbReference>
<dbReference type="InterPro" id="IPR010377">
    <property type="entry name" value="YabA"/>
</dbReference>
<dbReference type="NCBIfam" id="NF009641">
    <property type="entry name" value="PRK13169.1-2"/>
    <property type="match status" value="1"/>
</dbReference>
<dbReference type="Pfam" id="PF06156">
    <property type="entry name" value="YabA"/>
    <property type="match status" value="1"/>
</dbReference>
<dbReference type="PIRSF" id="PIRSF021439">
    <property type="entry name" value="DUF972"/>
    <property type="match status" value="1"/>
</dbReference>
<gene>
    <name evidence="1" type="primary">yabA</name>
    <name type="ordered locus">NWMN_0450</name>
</gene>